<reference key="1">
    <citation type="submission" date="1997-03" db="EMBL/GenBank/DDBJ databases">
        <title>Cloning and sequencing of the bovine prostacyclin receptor gene.</title>
        <authorList>
            <person name="Hasse A."/>
            <person name="Schroer K."/>
        </authorList>
    </citation>
    <scope>NUCLEOTIDE SEQUENCE [GENOMIC DNA]</scope>
</reference>
<sequence length="385" mass="41247">MADSCRNLTYVRDSVGPATSTLMFVAGVVGNGLALGILGARRHSRPSAFAVLVTGLGVTDLLGTCFLSPAVFAAYARNSSLLGLARGRPALCDAFAFAMTFFGLASTLILFAMAVERCLALSHPYLYAQLDGPRRARLALPAIYAFCTIFCSLPFLGLGQHQQYCPGSWCFIRMRSAEPGGCAFLLAYASLVALLVAAIVLCNGSVTLSLCRMYRQQRRHQARCPRPRAGEDEVDHLILLALMTGIMAVCSLPLTPQIRGFTQAIAPDSSEMGDLLAFRFNAFNPILDPWVFILFRKSVFQRLKLWFCCLYSRPAQGDSRTSLSQSASGRKDSSAPPALEGKKGNWVPLSAWGEGQGGPLPAVQLPTSTVGTPSKAGSEAACSLC</sequence>
<protein>
    <recommendedName>
        <fullName>Prostacyclin receptor</fullName>
    </recommendedName>
    <alternativeName>
        <fullName>Prostaglandin I2 receptor</fullName>
        <shortName>PGI receptor</shortName>
        <shortName>PGI2 receptor</shortName>
    </alternativeName>
    <alternativeName>
        <fullName>Prostanoid IP receptor</fullName>
    </alternativeName>
</protein>
<evidence type="ECO:0000250" key="1"/>
<evidence type="ECO:0000255" key="2"/>
<evidence type="ECO:0000255" key="3">
    <source>
        <dbReference type="PROSITE-ProRule" id="PRU00521"/>
    </source>
</evidence>
<evidence type="ECO:0000256" key="4">
    <source>
        <dbReference type="SAM" id="MobiDB-lite"/>
    </source>
</evidence>
<gene>
    <name type="primary">PTGIR</name>
</gene>
<keyword id="KW-1003">Cell membrane</keyword>
<keyword id="KW-1015">Disulfide bond</keyword>
<keyword id="KW-0297">G-protein coupled receptor</keyword>
<keyword id="KW-0325">Glycoprotein</keyword>
<keyword id="KW-0449">Lipoprotein</keyword>
<keyword id="KW-0472">Membrane</keyword>
<keyword id="KW-0488">Methylation</keyword>
<keyword id="KW-0636">Prenylation</keyword>
<keyword id="KW-0675">Receptor</keyword>
<keyword id="KW-1185">Reference proteome</keyword>
<keyword id="KW-0807">Transducer</keyword>
<keyword id="KW-0812">Transmembrane</keyword>
<keyword id="KW-1133">Transmembrane helix</keyword>
<comment type="function">
    <text>Receptor for prostacyclin (prostaglandin I2 or PGI2). The activity of this receptor is mediated by G(s) proteins which activate adenylate cyclase.</text>
</comment>
<comment type="subunit">
    <text evidence="1">Interacts (non-isoprenylated C-terminus) with PDZK1.</text>
</comment>
<comment type="subcellular location">
    <subcellularLocation>
        <location>Cell membrane</location>
        <topology>Multi-pass membrane protein</topology>
    </subcellularLocation>
</comment>
<comment type="PTM">
    <text evidence="1">Isoprenylation does not influence ligand binding but is required for efficient coupling to the effectors adenylyl cyclase and phospholipase C.</text>
</comment>
<comment type="similarity">
    <text evidence="3">Belongs to the G-protein coupled receptor 1 family.</text>
</comment>
<name>PI2R_BOVIN</name>
<proteinExistence type="inferred from homology"/>
<feature type="chain" id="PRO_0000070074" description="Prostacyclin receptor">
    <location>
        <begin position="1"/>
        <end position="382"/>
    </location>
</feature>
<feature type="propeptide" id="PRO_0000240003" description="Removed in mature form" evidence="2">
    <location>
        <begin position="383"/>
        <end position="385"/>
    </location>
</feature>
<feature type="topological domain" description="Extracellular" evidence="2">
    <location>
        <begin position="1"/>
        <end position="16"/>
    </location>
</feature>
<feature type="transmembrane region" description="Helical; Name=1" evidence="2">
    <location>
        <begin position="17"/>
        <end position="38"/>
    </location>
</feature>
<feature type="topological domain" description="Cytoplasmic" evidence="2">
    <location>
        <begin position="39"/>
        <end position="51"/>
    </location>
</feature>
<feature type="transmembrane region" description="Helical; Name=2" evidence="2">
    <location>
        <begin position="52"/>
        <end position="76"/>
    </location>
</feature>
<feature type="topological domain" description="Extracellular" evidence="2">
    <location>
        <begin position="77"/>
        <end position="94"/>
    </location>
</feature>
<feature type="transmembrane region" description="Helical; Name=3" evidence="2">
    <location>
        <begin position="95"/>
        <end position="115"/>
    </location>
</feature>
<feature type="topological domain" description="Cytoplasmic" evidence="2">
    <location>
        <begin position="116"/>
        <end position="134"/>
    </location>
</feature>
<feature type="transmembrane region" description="Helical; Name=4" evidence="2">
    <location>
        <begin position="135"/>
        <end position="158"/>
    </location>
</feature>
<feature type="topological domain" description="Extracellular" evidence="2">
    <location>
        <begin position="159"/>
        <end position="181"/>
    </location>
</feature>
<feature type="transmembrane region" description="Helical; Name=5" evidence="2">
    <location>
        <begin position="182"/>
        <end position="208"/>
    </location>
</feature>
<feature type="topological domain" description="Cytoplasmic" evidence="2">
    <location>
        <begin position="209"/>
        <end position="234"/>
    </location>
</feature>
<feature type="transmembrane region" description="Helical; Name=6" evidence="2">
    <location>
        <begin position="235"/>
        <end position="259"/>
    </location>
</feature>
<feature type="topological domain" description="Extracellular" evidence="2">
    <location>
        <begin position="260"/>
        <end position="273"/>
    </location>
</feature>
<feature type="transmembrane region" description="Helical; Name=7" evidence="2">
    <location>
        <begin position="274"/>
        <end position="294"/>
    </location>
</feature>
<feature type="topological domain" description="Cytoplasmic" evidence="2">
    <location>
        <begin position="295"/>
        <end position="385"/>
    </location>
</feature>
<feature type="region of interest" description="Disordered" evidence="4">
    <location>
        <begin position="315"/>
        <end position="344"/>
    </location>
</feature>
<feature type="compositionally biased region" description="Polar residues" evidence="4">
    <location>
        <begin position="318"/>
        <end position="328"/>
    </location>
</feature>
<feature type="modified residue" description="Cysteine methyl ester" evidence="1">
    <location>
        <position position="382"/>
    </location>
</feature>
<feature type="lipid moiety-binding region" description="S-farnesyl cysteine" evidence="1">
    <location>
        <position position="382"/>
    </location>
</feature>
<feature type="glycosylation site" description="N-linked (GlcNAc...) asparagine" evidence="2">
    <location>
        <position position="7"/>
    </location>
</feature>
<feature type="disulfide bond" evidence="3">
    <location>
        <begin position="5"/>
        <end position="165"/>
    </location>
</feature>
<feature type="disulfide bond" evidence="3">
    <location>
        <begin position="92"/>
        <end position="170"/>
    </location>
</feature>
<dbReference type="EMBL" id="Z93039">
    <property type="protein sequence ID" value="CAB07510.1"/>
    <property type="molecule type" value="Genomic_DNA"/>
</dbReference>
<dbReference type="EMBL" id="Z93040">
    <property type="protein sequence ID" value="CAB07510.1"/>
    <property type="status" value="JOINED"/>
    <property type="molecule type" value="Genomic_DNA"/>
</dbReference>
<dbReference type="SMR" id="P79393"/>
<dbReference type="FunCoup" id="P79393">
    <property type="interactions" value="172"/>
</dbReference>
<dbReference type="STRING" id="9913.ENSBTAP00000019413"/>
<dbReference type="GlyCosmos" id="P79393">
    <property type="glycosylation" value="1 site, No reported glycans"/>
</dbReference>
<dbReference type="GlyGen" id="P79393">
    <property type="glycosylation" value="1 site"/>
</dbReference>
<dbReference type="PaxDb" id="9913-ENSBTAP00000019413"/>
<dbReference type="eggNOG" id="KOG3656">
    <property type="taxonomic scope" value="Eukaryota"/>
</dbReference>
<dbReference type="InParanoid" id="P79393"/>
<dbReference type="OrthoDB" id="5959154at2759"/>
<dbReference type="Proteomes" id="UP000009136">
    <property type="component" value="Unplaced"/>
</dbReference>
<dbReference type="GO" id="GO:0005886">
    <property type="term" value="C:plasma membrane"/>
    <property type="evidence" value="ECO:0000318"/>
    <property type="project" value="GO_Central"/>
</dbReference>
<dbReference type="GO" id="GO:0016501">
    <property type="term" value="F:prostacyclin receptor activity"/>
    <property type="evidence" value="ECO:0000318"/>
    <property type="project" value="GO_Central"/>
</dbReference>
<dbReference type="GO" id="GO:0007189">
    <property type="term" value="P:adenylate cyclase-activating G protein-coupled receptor signaling pathway"/>
    <property type="evidence" value="ECO:0000318"/>
    <property type="project" value="GO_Central"/>
</dbReference>
<dbReference type="GO" id="GO:0006954">
    <property type="term" value="P:inflammatory response"/>
    <property type="evidence" value="ECO:0000318"/>
    <property type="project" value="GO_Central"/>
</dbReference>
<dbReference type="GO" id="GO:0048662">
    <property type="term" value="P:negative regulation of smooth muscle cell proliferation"/>
    <property type="evidence" value="ECO:0000318"/>
    <property type="project" value="GO_Central"/>
</dbReference>
<dbReference type="GO" id="GO:0007204">
    <property type="term" value="P:positive regulation of cytosolic calcium ion concentration"/>
    <property type="evidence" value="ECO:0000318"/>
    <property type="project" value="GO_Central"/>
</dbReference>
<dbReference type="FunFam" id="1.20.1070.10:FF:000198">
    <property type="entry name" value="Prostaglandin I2 receptor"/>
    <property type="match status" value="1"/>
</dbReference>
<dbReference type="Gene3D" id="1.20.1070.10">
    <property type="entry name" value="Rhodopsin 7-helix transmembrane proteins"/>
    <property type="match status" value="1"/>
</dbReference>
<dbReference type="InterPro" id="IPR000276">
    <property type="entry name" value="GPCR_Rhodpsn"/>
</dbReference>
<dbReference type="InterPro" id="IPR017452">
    <property type="entry name" value="GPCR_Rhodpsn_7TM"/>
</dbReference>
<dbReference type="InterPro" id="IPR008365">
    <property type="entry name" value="Prostanoid_rcpt"/>
</dbReference>
<dbReference type="InterPro" id="IPR000370">
    <property type="entry name" value="Prostglndn_IP_rcpt"/>
</dbReference>
<dbReference type="PANTHER" id="PTHR11866">
    <property type="entry name" value="G-PROTEIN COUPLED RECEPTOR FAMILY 1 MEMBER"/>
    <property type="match status" value="1"/>
</dbReference>
<dbReference type="PANTHER" id="PTHR11866:SF7">
    <property type="entry name" value="PROSTACYCLIN RECEPTOR"/>
    <property type="match status" value="1"/>
</dbReference>
<dbReference type="Pfam" id="PF00001">
    <property type="entry name" value="7tm_1"/>
    <property type="match status" value="1"/>
</dbReference>
<dbReference type="PRINTS" id="PR00237">
    <property type="entry name" value="GPCRRHODOPSN"/>
</dbReference>
<dbReference type="PRINTS" id="PR01788">
    <property type="entry name" value="PROSTANOIDR"/>
</dbReference>
<dbReference type="PRINTS" id="PR00856">
    <property type="entry name" value="PRSTNOIDIPR"/>
</dbReference>
<dbReference type="SUPFAM" id="SSF81321">
    <property type="entry name" value="Family A G protein-coupled receptor-like"/>
    <property type="match status" value="1"/>
</dbReference>
<dbReference type="PROSITE" id="PS00237">
    <property type="entry name" value="G_PROTEIN_RECEP_F1_1"/>
    <property type="match status" value="1"/>
</dbReference>
<dbReference type="PROSITE" id="PS50262">
    <property type="entry name" value="G_PROTEIN_RECEP_F1_2"/>
    <property type="match status" value="1"/>
</dbReference>
<organism>
    <name type="scientific">Bos taurus</name>
    <name type="common">Bovine</name>
    <dbReference type="NCBI Taxonomy" id="9913"/>
    <lineage>
        <taxon>Eukaryota</taxon>
        <taxon>Metazoa</taxon>
        <taxon>Chordata</taxon>
        <taxon>Craniata</taxon>
        <taxon>Vertebrata</taxon>
        <taxon>Euteleostomi</taxon>
        <taxon>Mammalia</taxon>
        <taxon>Eutheria</taxon>
        <taxon>Laurasiatheria</taxon>
        <taxon>Artiodactyla</taxon>
        <taxon>Ruminantia</taxon>
        <taxon>Pecora</taxon>
        <taxon>Bovidae</taxon>
        <taxon>Bovinae</taxon>
        <taxon>Bos</taxon>
    </lineage>
</organism>
<accession>P79393</accession>